<dbReference type="EC" id="3.1.26.4"/>
<dbReference type="EMBL" id="BA000004">
    <property type="protein sequence ID" value="BAB04582.1"/>
    <property type="molecule type" value="Genomic_DNA"/>
</dbReference>
<dbReference type="PIR" id="G83757">
    <property type="entry name" value="G83757"/>
</dbReference>
<dbReference type="RefSeq" id="WP_010897036.1">
    <property type="nucleotide sequence ID" value="NC_002570.2"/>
</dbReference>
<dbReference type="PDB" id="1ZBF">
    <property type="method" value="X-ray"/>
    <property type="resolution" value="1.50 A"/>
    <property type="chains" value="A=59-196"/>
</dbReference>
<dbReference type="PDB" id="1ZBI">
    <property type="method" value="X-ray"/>
    <property type="resolution" value="1.85 A"/>
    <property type="chains" value="A/B=59-196"/>
</dbReference>
<dbReference type="PDB" id="1ZBL">
    <property type="method" value="X-ray"/>
    <property type="resolution" value="2.20 A"/>
    <property type="chains" value="A/B=59-191"/>
</dbReference>
<dbReference type="PDB" id="2G8F">
    <property type="method" value="X-ray"/>
    <property type="resolution" value="1.65 A"/>
    <property type="chains" value="A=59-196"/>
</dbReference>
<dbReference type="PDB" id="2G8H">
    <property type="method" value="X-ray"/>
    <property type="resolution" value="1.85 A"/>
    <property type="chains" value="A=59-196"/>
</dbReference>
<dbReference type="PDB" id="2G8I">
    <property type="method" value="X-ray"/>
    <property type="resolution" value="1.65 A"/>
    <property type="chains" value="A=59-196"/>
</dbReference>
<dbReference type="PDB" id="2G8K">
    <property type="method" value="X-ray"/>
    <property type="resolution" value="1.65 A"/>
    <property type="chains" value="A=59-196"/>
</dbReference>
<dbReference type="PDB" id="2G8U">
    <property type="method" value="X-ray"/>
    <property type="resolution" value="2.70 A"/>
    <property type="chains" value="A=59-196"/>
</dbReference>
<dbReference type="PDB" id="2G8V">
    <property type="method" value="X-ray"/>
    <property type="resolution" value="1.85 A"/>
    <property type="chains" value="A=59-196"/>
</dbReference>
<dbReference type="PDB" id="2G8W">
    <property type="method" value="X-ray"/>
    <property type="resolution" value="2.05 A"/>
    <property type="chains" value="A=59-196"/>
</dbReference>
<dbReference type="PDB" id="2R7Y">
    <property type="method" value="X-ray"/>
    <property type="resolution" value="1.80 A"/>
    <property type="chains" value="A=62-193"/>
</dbReference>
<dbReference type="PDB" id="3D0P">
    <property type="method" value="X-ray"/>
    <property type="resolution" value="1.80 A"/>
    <property type="chains" value="A/C=61-194"/>
</dbReference>
<dbReference type="PDB" id="3EY1">
    <property type="method" value="X-ray"/>
    <property type="resolution" value="1.60 A"/>
    <property type="chains" value="A=59-196"/>
</dbReference>
<dbReference type="PDB" id="3I8D">
    <property type="method" value="X-ray"/>
    <property type="resolution" value="1.61 A"/>
    <property type="chains" value="A/C=62-193"/>
</dbReference>
<dbReference type="PDB" id="3TWH">
    <property type="method" value="X-ray"/>
    <property type="resolution" value="1.79 A"/>
    <property type="chains" value="A=59-196"/>
</dbReference>
<dbReference type="PDB" id="3ULD">
    <property type="method" value="X-ray"/>
    <property type="resolution" value="1.60 A"/>
    <property type="chains" value="A=59-196"/>
</dbReference>
<dbReference type="PDB" id="4HTU">
    <property type="method" value="X-ray"/>
    <property type="resolution" value="1.49 A"/>
    <property type="chains" value="A/B=61-194"/>
</dbReference>
<dbReference type="PDB" id="4HUE">
    <property type="method" value="X-ray"/>
    <property type="resolution" value="1.56 A"/>
    <property type="chains" value="A/B=61-194"/>
</dbReference>
<dbReference type="PDB" id="4HUF">
    <property type="method" value="X-ray"/>
    <property type="resolution" value="1.69 A"/>
    <property type="chains" value="A/B=61-194"/>
</dbReference>
<dbReference type="PDB" id="4HUG">
    <property type="method" value="X-ray"/>
    <property type="resolution" value="1.64 A"/>
    <property type="chains" value="A/B=61-194"/>
</dbReference>
<dbReference type="PDB" id="4OPJ">
    <property type="method" value="X-ray"/>
    <property type="resolution" value="1.54 A"/>
    <property type="chains" value="A/C=59-196"/>
</dbReference>
<dbReference type="PDB" id="4OPK">
    <property type="method" value="X-ray"/>
    <property type="resolution" value="1.54 A"/>
    <property type="chains" value="A/C=59-196"/>
</dbReference>
<dbReference type="PDB" id="5SWM">
    <property type="method" value="X-ray"/>
    <property type="resolution" value="1.50 A"/>
    <property type="chains" value="A/B=59-196"/>
</dbReference>
<dbReference type="PDB" id="5US2">
    <property type="method" value="X-ray"/>
    <property type="resolution" value="1.90 A"/>
    <property type="chains" value="A=59-196"/>
</dbReference>
<dbReference type="PDB" id="5USA">
    <property type="method" value="X-ray"/>
    <property type="resolution" value="1.80 A"/>
    <property type="chains" value="A=59-196"/>
</dbReference>
<dbReference type="PDB" id="5USE">
    <property type="method" value="X-ray"/>
    <property type="resolution" value="1.73 A"/>
    <property type="chains" value="A=59-196"/>
</dbReference>
<dbReference type="PDB" id="5USG">
    <property type="method" value="X-ray"/>
    <property type="resolution" value="1.70 A"/>
    <property type="chains" value="A=59-196"/>
</dbReference>
<dbReference type="PDB" id="5VAJ">
    <property type="method" value="X-ray"/>
    <property type="resolution" value="1.95 A"/>
    <property type="chains" value="A/B=59-196"/>
</dbReference>
<dbReference type="PDB" id="5W7N">
    <property type="method" value="X-ray"/>
    <property type="resolution" value="1.80 A"/>
    <property type="chains" value="A=62-193"/>
</dbReference>
<dbReference type="PDB" id="5W7O">
    <property type="method" value="X-ray"/>
    <property type="resolution" value="1.75 A"/>
    <property type="chains" value="A=62-193"/>
</dbReference>
<dbReference type="PDB" id="5WJR">
    <property type="method" value="X-ray"/>
    <property type="resolution" value="1.70 A"/>
    <property type="chains" value="A=59-196"/>
</dbReference>
<dbReference type="PDB" id="6DMN">
    <property type="method" value="X-ray"/>
    <property type="resolution" value="1.27 A"/>
    <property type="chains" value="A=59-196"/>
</dbReference>
<dbReference type="PDB" id="6DMV">
    <property type="method" value="X-ray"/>
    <property type="resolution" value="1.52 A"/>
    <property type="chains" value="A=59-196"/>
</dbReference>
<dbReference type="PDB" id="6DO8">
    <property type="method" value="X-ray"/>
    <property type="resolution" value="1.41 A"/>
    <property type="chains" value="A=59-196"/>
</dbReference>
<dbReference type="PDB" id="6DO9">
    <property type="method" value="X-ray"/>
    <property type="resolution" value="1.36 A"/>
    <property type="chains" value="A=61-196"/>
</dbReference>
<dbReference type="PDB" id="6DOA">
    <property type="method" value="X-ray"/>
    <property type="resolution" value="1.47 A"/>
    <property type="chains" value="A=61-196"/>
</dbReference>
<dbReference type="PDB" id="6DOB">
    <property type="method" value="X-ray"/>
    <property type="resolution" value="1.34 A"/>
    <property type="chains" value="A=59-196"/>
</dbReference>
<dbReference type="PDB" id="6DOC">
    <property type="method" value="X-ray"/>
    <property type="resolution" value="1.50 A"/>
    <property type="chains" value="A=59-196"/>
</dbReference>
<dbReference type="PDB" id="6DOD">
    <property type="method" value="X-ray"/>
    <property type="resolution" value="1.53 A"/>
    <property type="chains" value="A=59-196"/>
</dbReference>
<dbReference type="PDB" id="6DOE">
    <property type="method" value="X-ray"/>
    <property type="resolution" value="1.45 A"/>
    <property type="chains" value="A=61-196"/>
</dbReference>
<dbReference type="PDB" id="6DOF">
    <property type="method" value="X-ray"/>
    <property type="resolution" value="1.43 A"/>
    <property type="chains" value="A=59-196"/>
</dbReference>
<dbReference type="PDB" id="6DOG">
    <property type="method" value="X-ray"/>
    <property type="resolution" value="1.28 A"/>
    <property type="chains" value="A=59-196"/>
</dbReference>
<dbReference type="PDB" id="6DOH">
    <property type="method" value="X-ray"/>
    <property type="resolution" value="1.36 A"/>
    <property type="chains" value="A=61-193"/>
</dbReference>
<dbReference type="PDB" id="6DOI">
    <property type="method" value="X-ray"/>
    <property type="resolution" value="1.95 A"/>
    <property type="chains" value="A=61-193"/>
</dbReference>
<dbReference type="PDB" id="6DOJ">
    <property type="method" value="X-ray"/>
    <property type="resolution" value="1.40 A"/>
    <property type="chains" value="A=61-195"/>
</dbReference>
<dbReference type="PDB" id="6DOK">
    <property type="method" value="X-ray"/>
    <property type="resolution" value="1.38 A"/>
    <property type="chains" value="A=61-195"/>
</dbReference>
<dbReference type="PDB" id="6DOL">
    <property type="method" value="X-ray"/>
    <property type="resolution" value="1.43 A"/>
    <property type="chains" value="A=61-195"/>
</dbReference>
<dbReference type="PDB" id="6DOM">
    <property type="method" value="X-ray"/>
    <property type="resolution" value="1.43 A"/>
    <property type="chains" value="A=61-196"/>
</dbReference>
<dbReference type="PDB" id="6DON">
    <property type="method" value="X-ray"/>
    <property type="resolution" value="1.42 A"/>
    <property type="chains" value="A=61-196"/>
</dbReference>
<dbReference type="PDB" id="6DOO">
    <property type="method" value="X-ray"/>
    <property type="resolution" value="1.44 A"/>
    <property type="chains" value="A=61-196"/>
</dbReference>
<dbReference type="PDB" id="6DOP">
    <property type="method" value="X-ray"/>
    <property type="resolution" value="1.25 A"/>
    <property type="chains" value="A=59-196"/>
</dbReference>
<dbReference type="PDB" id="6DOQ">
    <property type="method" value="X-ray"/>
    <property type="resolution" value="1.42 A"/>
    <property type="chains" value="A=59-196"/>
</dbReference>
<dbReference type="PDB" id="6DOR">
    <property type="method" value="X-ray"/>
    <property type="resolution" value="1.50 A"/>
    <property type="chains" value="A=61-196"/>
</dbReference>
<dbReference type="PDB" id="6DOS">
    <property type="method" value="X-ray"/>
    <property type="resolution" value="1.32 A"/>
    <property type="chains" value="A=61-195"/>
</dbReference>
<dbReference type="PDB" id="6DOT">
    <property type="method" value="X-ray"/>
    <property type="resolution" value="1.42 A"/>
    <property type="chains" value="A=61-196"/>
</dbReference>
<dbReference type="PDB" id="6DOU">
    <property type="method" value="X-ray"/>
    <property type="resolution" value="1.49 A"/>
    <property type="chains" value="A=61-196"/>
</dbReference>
<dbReference type="PDB" id="6DOV">
    <property type="method" value="X-ray"/>
    <property type="resolution" value="1.52 A"/>
    <property type="chains" value="A=61-196"/>
</dbReference>
<dbReference type="PDB" id="6DOW">
    <property type="method" value="X-ray"/>
    <property type="resolution" value="1.50 A"/>
    <property type="chains" value="A=61-196"/>
</dbReference>
<dbReference type="PDB" id="6DOX">
    <property type="method" value="X-ray"/>
    <property type="resolution" value="1.45 A"/>
    <property type="chains" value="A=61-196"/>
</dbReference>
<dbReference type="PDB" id="6DOY">
    <property type="method" value="X-ray"/>
    <property type="resolution" value="1.45 A"/>
    <property type="chains" value="A=59-196"/>
</dbReference>
<dbReference type="PDB" id="6DOZ">
    <property type="method" value="X-ray"/>
    <property type="resolution" value="1.57 A"/>
    <property type="chains" value="A=59-196"/>
</dbReference>
<dbReference type="PDB" id="6DP0">
    <property type="method" value="X-ray"/>
    <property type="resolution" value="1.45 A"/>
    <property type="chains" value="A=61-195"/>
</dbReference>
<dbReference type="PDB" id="6DP1">
    <property type="method" value="X-ray"/>
    <property type="resolution" value="1.42 A"/>
    <property type="chains" value="A=59-196"/>
</dbReference>
<dbReference type="PDB" id="6DP2">
    <property type="method" value="X-ray"/>
    <property type="resolution" value="1.66 A"/>
    <property type="chains" value="A=59-196"/>
</dbReference>
<dbReference type="PDB" id="6DP3">
    <property type="method" value="X-ray"/>
    <property type="resolution" value="1.46 A"/>
    <property type="chains" value="A=59-196"/>
</dbReference>
<dbReference type="PDB" id="6DP4">
    <property type="method" value="X-ray"/>
    <property type="resolution" value="1.37 A"/>
    <property type="chains" value="A=59-196"/>
</dbReference>
<dbReference type="PDB" id="6DP5">
    <property type="method" value="X-ray"/>
    <property type="resolution" value="1.43 A"/>
    <property type="chains" value="A=59-196"/>
</dbReference>
<dbReference type="PDB" id="6DP6">
    <property type="method" value="X-ray"/>
    <property type="resolution" value="1.40 A"/>
    <property type="chains" value="A=59-196"/>
</dbReference>
<dbReference type="PDB" id="6DP7">
    <property type="method" value="X-ray"/>
    <property type="resolution" value="1.38 A"/>
    <property type="chains" value="A=61-195"/>
</dbReference>
<dbReference type="PDB" id="6DP8">
    <property type="method" value="X-ray"/>
    <property type="resolution" value="1.32 A"/>
    <property type="chains" value="A=59-196"/>
</dbReference>
<dbReference type="PDB" id="6DP9">
    <property type="method" value="X-ray"/>
    <property type="resolution" value="1.40 A"/>
    <property type="chains" value="A=61-196"/>
</dbReference>
<dbReference type="PDB" id="6DPA">
    <property type="method" value="X-ray"/>
    <property type="resolution" value="1.49 A"/>
    <property type="chains" value="A=61-196"/>
</dbReference>
<dbReference type="PDB" id="6DPB">
    <property type="method" value="X-ray"/>
    <property type="resolution" value="1.32 A"/>
    <property type="chains" value="A=61-196"/>
</dbReference>
<dbReference type="PDB" id="6DPC">
    <property type="method" value="X-ray"/>
    <property type="resolution" value="1.34 A"/>
    <property type="chains" value="A=61-196"/>
</dbReference>
<dbReference type="PDB" id="6DPD">
    <property type="method" value="X-ray"/>
    <property type="resolution" value="1.46 A"/>
    <property type="chains" value="A=61-196"/>
</dbReference>
<dbReference type="PDB" id="6DPE">
    <property type="method" value="X-ray"/>
    <property type="resolution" value="1.56 A"/>
    <property type="chains" value="A=61-196"/>
</dbReference>
<dbReference type="PDB" id="6DPF">
    <property type="method" value="X-ray"/>
    <property type="resolution" value="1.56 A"/>
    <property type="chains" value="A=61-196"/>
</dbReference>
<dbReference type="PDB" id="6DPG">
    <property type="method" value="X-ray"/>
    <property type="resolution" value="1.38 A"/>
    <property type="chains" value="A=59-196"/>
</dbReference>
<dbReference type="PDB" id="6DPH">
    <property type="method" value="X-ray"/>
    <property type="resolution" value="1.34 A"/>
    <property type="chains" value="A=59-196"/>
</dbReference>
<dbReference type="PDB" id="6DPI">
    <property type="method" value="X-ray"/>
    <property type="resolution" value="1.35 A"/>
    <property type="chains" value="A=59-196"/>
</dbReference>
<dbReference type="PDB" id="6DPJ">
    <property type="method" value="X-ray"/>
    <property type="resolution" value="1.55 A"/>
    <property type="chains" value="A=59-196"/>
</dbReference>
<dbReference type="PDB" id="6DPK">
    <property type="method" value="X-ray"/>
    <property type="resolution" value="1.39 A"/>
    <property type="chains" value="A=59-196"/>
</dbReference>
<dbReference type="PDB" id="6DPL">
    <property type="method" value="X-ray"/>
    <property type="resolution" value="1.45 A"/>
    <property type="chains" value="A=59-196"/>
</dbReference>
<dbReference type="PDB" id="6DPM">
    <property type="method" value="X-ray"/>
    <property type="resolution" value="1.68 A"/>
    <property type="chains" value="A=59-196"/>
</dbReference>
<dbReference type="PDB" id="6DPN">
    <property type="method" value="X-ray"/>
    <property type="resolution" value="1.49 A"/>
    <property type="chains" value="A=59-196"/>
</dbReference>
<dbReference type="PDB" id="6DPO">
    <property type="method" value="X-ray"/>
    <property type="resolution" value="1.45 A"/>
    <property type="chains" value="A=59-196"/>
</dbReference>
<dbReference type="PDB" id="6DPP">
    <property type="method" value="X-ray"/>
    <property type="resolution" value="1.45 A"/>
    <property type="chains" value="A=61-196"/>
</dbReference>
<dbReference type="PDB" id="8CTY">
    <property type="method" value="X-ray"/>
    <property type="resolution" value="2.30 A"/>
    <property type="chains" value="A/B/C/D/E/F/G/H=59-196"/>
</dbReference>
<dbReference type="PDB" id="8CTZ">
    <property type="method" value="X-ray"/>
    <property type="resolution" value="2.32 A"/>
    <property type="chains" value="A/B/C=59-196"/>
</dbReference>
<dbReference type="PDB" id="8CU0">
    <property type="method" value="X-ray"/>
    <property type="resolution" value="1.74 A"/>
    <property type="chains" value="A/B/C=59-196"/>
</dbReference>
<dbReference type="PDB" id="8SV3">
    <property type="method" value="X-ray"/>
    <property type="resolution" value="1.51 A"/>
    <property type="chains" value="A/B/C=59-196"/>
</dbReference>
<dbReference type="PDB" id="8SV4">
    <property type="method" value="X-ray"/>
    <property type="resolution" value="2.30 A"/>
    <property type="chains" value="A=59-196"/>
</dbReference>
<dbReference type="PDBsum" id="1ZBF"/>
<dbReference type="PDBsum" id="1ZBI"/>
<dbReference type="PDBsum" id="1ZBL"/>
<dbReference type="PDBsum" id="2G8F"/>
<dbReference type="PDBsum" id="2G8H"/>
<dbReference type="PDBsum" id="2G8I"/>
<dbReference type="PDBsum" id="2G8K"/>
<dbReference type="PDBsum" id="2G8U"/>
<dbReference type="PDBsum" id="2G8V"/>
<dbReference type="PDBsum" id="2G8W"/>
<dbReference type="PDBsum" id="2R7Y"/>
<dbReference type="PDBsum" id="3D0P"/>
<dbReference type="PDBsum" id="3EY1"/>
<dbReference type="PDBsum" id="3I8D"/>
<dbReference type="PDBsum" id="3TWH"/>
<dbReference type="PDBsum" id="3ULD"/>
<dbReference type="PDBsum" id="4HTU"/>
<dbReference type="PDBsum" id="4HUE"/>
<dbReference type="PDBsum" id="4HUF"/>
<dbReference type="PDBsum" id="4HUG"/>
<dbReference type="PDBsum" id="4OPJ"/>
<dbReference type="PDBsum" id="4OPK"/>
<dbReference type="PDBsum" id="5SWM"/>
<dbReference type="PDBsum" id="5US2"/>
<dbReference type="PDBsum" id="5USA"/>
<dbReference type="PDBsum" id="5USE"/>
<dbReference type="PDBsum" id="5USG"/>
<dbReference type="PDBsum" id="5VAJ"/>
<dbReference type="PDBsum" id="5W7N"/>
<dbReference type="PDBsum" id="5W7O"/>
<dbReference type="PDBsum" id="5WJR"/>
<dbReference type="PDBsum" id="6DMN"/>
<dbReference type="PDBsum" id="6DMV"/>
<dbReference type="PDBsum" id="6DO8"/>
<dbReference type="PDBsum" id="6DO9"/>
<dbReference type="PDBsum" id="6DOA"/>
<dbReference type="PDBsum" id="6DOB"/>
<dbReference type="PDBsum" id="6DOC"/>
<dbReference type="PDBsum" id="6DOD"/>
<dbReference type="PDBsum" id="6DOE"/>
<dbReference type="PDBsum" id="6DOF"/>
<dbReference type="PDBsum" id="6DOG"/>
<dbReference type="PDBsum" id="6DOH"/>
<dbReference type="PDBsum" id="6DOI"/>
<dbReference type="PDBsum" id="6DOJ"/>
<dbReference type="PDBsum" id="6DOK"/>
<dbReference type="PDBsum" id="6DOL"/>
<dbReference type="PDBsum" id="6DOM"/>
<dbReference type="PDBsum" id="6DON"/>
<dbReference type="PDBsum" id="6DOO"/>
<dbReference type="PDBsum" id="6DOP"/>
<dbReference type="PDBsum" id="6DOQ"/>
<dbReference type="PDBsum" id="6DOR"/>
<dbReference type="PDBsum" id="6DOS"/>
<dbReference type="PDBsum" id="6DOT"/>
<dbReference type="PDBsum" id="6DOU"/>
<dbReference type="PDBsum" id="6DOV"/>
<dbReference type="PDBsum" id="6DOW"/>
<dbReference type="PDBsum" id="6DOX"/>
<dbReference type="PDBsum" id="6DOY"/>
<dbReference type="PDBsum" id="6DOZ"/>
<dbReference type="PDBsum" id="6DP0"/>
<dbReference type="PDBsum" id="6DP1"/>
<dbReference type="PDBsum" id="6DP2"/>
<dbReference type="PDBsum" id="6DP3"/>
<dbReference type="PDBsum" id="6DP4"/>
<dbReference type="PDBsum" id="6DP5"/>
<dbReference type="PDBsum" id="6DP6"/>
<dbReference type="PDBsum" id="6DP7"/>
<dbReference type="PDBsum" id="6DP8"/>
<dbReference type="PDBsum" id="6DP9"/>
<dbReference type="PDBsum" id="6DPA"/>
<dbReference type="PDBsum" id="6DPB"/>
<dbReference type="PDBsum" id="6DPC"/>
<dbReference type="PDBsum" id="6DPD"/>
<dbReference type="PDBsum" id="6DPE"/>
<dbReference type="PDBsum" id="6DPF"/>
<dbReference type="PDBsum" id="6DPG"/>
<dbReference type="PDBsum" id="6DPH"/>
<dbReference type="PDBsum" id="6DPI"/>
<dbReference type="PDBsum" id="6DPJ"/>
<dbReference type="PDBsum" id="6DPK"/>
<dbReference type="PDBsum" id="6DPL"/>
<dbReference type="PDBsum" id="6DPM"/>
<dbReference type="PDBsum" id="6DPN"/>
<dbReference type="PDBsum" id="6DPO"/>
<dbReference type="PDBsum" id="6DPP"/>
<dbReference type="PDBsum" id="8CTY"/>
<dbReference type="PDBsum" id="8CTZ"/>
<dbReference type="PDBsum" id="8CU0"/>
<dbReference type="PDBsum" id="8SV3"/>
<dbReference type="PDBsum" id="8SV4"/>
<dbReference type="SMR" id="Q9KEI9"/>
<dbReference type="STRING" id="272558.gene:10726737"/>
<dbReference type="DrugBank" id="DB07652">
    <property type="generic name" value="1-[2-DEOXYRIBOFURANOSYL]-2,4-DIFLUORO-5-METHYL-BENZENE-5'MONOPHOSPHATE"/>
</dbReference>
<dbReference type="GeneID" id="87596408"/>
<dbReference type="KEGG" id="bha:BH0863"/>
<dbReference type="eggNOG" id="COG0328">
    <property type="taxonomic scope" value="Bacteria"/>
</dbReference>
<dbReference type="eggNOG" id="COG3341">
    <property type="taxonomic scope" value="Bacteria"/>
</dbReference>
<dbReference type="HOGENOM" id="CLU_080985_1_0_9"/>
<dbReference type="OrthoDB" id="9811552at2"/>
<dbReference type="BRENDA" id="3.1.13.2">
    <property type="organism ID" value="661"/>
</dbReference>
<dbReference type="BRENDA" id="3.1.26.4">
    <property type="organism ID" value="661"/>
</dbReference>
<dbReference type="EvolutionaryTrace" id="Q9KEI9"/>
<dbReference type="Proteomes" id="UP000001258">
    <property type="component" value="Chromosome"/>
</dbReference>
<dbReference type="GO" id="GO:0005737">
    <property type="term" value="C:cytoplasm"/>
    <property type="evidence" value="ECO:0007669"/>
    <property type="project" value="UniProtKB-SubCell"/>
</dbReference>
<dbReference type="GO" id="GO:0046872">
    <property type="term" value="F:metal ion binding"/>
    <property type="evidence" value="ECO:0007669"/>
    <property type="project" value="UniProtKB-KW"/>
</dbReference>
<dbReference type="GO" id="GO:0003676">
    <property type="term" value="F:nucleic acid binding"/>
    <property type="evidence" value="ECO:0007669"/>
    <property type="project" value="InterPro"/>
</dbReference>
<dbReference type="GO" id="GO:0004523">
    <property type="term" value="F:RNA-DNA hybrid ribonuclease activity"/>
    <property type="evidence" value="ECO:0007669"/>
    <property type="project" value="UniProtKB-EC"/>
</dbReference>
<dbReference type="GO" id="GO:0043137">
    <property type="term" value="P:DNA replication, removal of RNA primer"/>
    <property type="evidence" value="ECO:0007669"/>
    <property type="project" value="TreeGrafter"/>
</dbReference>
<dbReference type="CDD" id="cd13935">
    <property type="entry name" value="RNase_H_bacteria_like"/>
    <property type="match status" value="1"/>
</dbReference>
<dbReference type="FunFam" id="3.40.970.10:FF:000002">
    <property type="entry name" value="Ribonuclease H"/>
    <property type="match status" value="1"/>
</dbReference>
<dbReference type="Gene3D" id="3.30.420.10">
    <property type="entry name" value="Ribonuclease H-like superfamily/Ribonuclease H"/>
    <property type="match status" value="1"/>
</dbReference>
<dbReference type="Gene3D" id="3.40.970.10">
    <property type="entry name" value="Ribonuclease H1, N-terminal domain"/>
    <property type="match status" value="1"/>
</dbReference>
<dbReference type="InterPro" id="IPR009027">
    <property type="entry name" value="Ribosomal_bL9/RNase_H1_N"/>
</dbReference>
<dbReference type="InterPro" id="IPR050092">
    <property type="entry name" value="RNase_H"/>
</dbReference>
<dbReference type="InterPro" id="IPR011320">
    <property type="entry name" value="RNase_H1_N"/>
</dbReference>
<dbReference type="InterPro" id="IPR037056">
    <property type="entry name" value="RNase_H1_N_sf"/>
</dbReference>
<dbReference type="InterPro" id="IPR017290">
    <property type="entry name" value="RNase_H_bac"/>
</dbReference>
<dbReference type="InterPro" id="IPR012337">
    <property type="entry name" value="RNaseH-like_sf"/>
</dbReference>
<dbReference type="InterPro" id="IPR002156">
    <property type="entry name" value="RNaseH_domain"/>
</dbReference>
<dbReference type="InterPro" id="IPR036397">
    <property type="entry name" value="RNaseH_sf"/>
</dbReference>
<dbReference type="NCBIfam" id="NF046109">
    <property type="entry name" value="RNaseH_Halikb"/>
    <property type="match status" value="1"/>
</dbReference>
<dbReference type="PANTHER" id="PTHR10642">
    <property type="entry name" value="RIBONUCLEASE H1"/>
    <property type="match status" value="1"/>
</dbReference>
<dbReference type="PANTHER" id="PTHR10642:SF26">
    <property type="entry name" value="RIBONUCLEASE H1"/>
    <property type="match status" value="1"/>
</dbReference>
<dbReference type="Pfam" id="PF01693">
    <property type="entry name" value="Cauli_VI"/>
    <property type="match status" value="1"/>
</dbReference>
<dbReference type="PIRSF" id="PIRSF037839">
    <property type="entry name" value="Ribonuclease_H"/>
    <property type="match status" value="1"/>
</dbReference>
<dbReference type="SUPFAM" id="SSF55658">
    <property type="entry name" value="L9 N-domain-like"/>
    <property type="match status" value="1"/>
</dbReference>
<dbReference type="SUPFAM" id="SSF53098">
    <property type="entry name" value="Ribonuclease H-like"/>
    <property type="match status" value="1"/>
</dbReference>
<dbReference type="PROSITE" id="PS50879">
    <property type="entry name" value="RNASE_H_1"/>
    <property type="match status" value="1"/>
</dbReference>
<organism>
    <name type="scientific">Halalkalibacterium halodurans (strain ATCC BAA-125 / DSM 18197 / FERM 7344 / JCM 9153 / C-125)</name>
    <name type="common">Bacillus halodurans</name>
    <dbReference type="NCBI Taxonomy" id="272558"/>
    <lineage>
        <taxon>Bacteria</taxon>
        <taxon>Bacillati</taxon>
        <taxon>Bacillota</taxon>
        <taxon>Bacilli</taxon>
        <taxon>Bacillales</taxon>
        <taxon>Bacillaceae</taxon>
        <taxon>Halalkalibacterium (ex Joshi et al. 2022)</taxon>
    </lineage>
</organism>
<comment type="function">
    <text evidence="2">Endonuclease that specifically degrades the RNA of RNA-DNA hybrids.</text>
</comment>
<comment type="catalytic activity">
    <reaction>
        <text>Endonucleolytic cleavage to 5'-phosphomonoester.</text>
        <dbReference type="EC" id="3.1.26.4"/>
    </reaction>
</comment>
<comment type="cofactor">
    <cofactor>
        <name>Mn(2+)</name>
        <dbReference type="ChEBI" id="CHEBI:29035"/>
    </cofactor>
    <cofactor>
        <name>Mg(2+)</name>
        <dbReference type="ChEBI" id="CHEBI:18420"/>
    </cofactor>
    <text>Binds 2 metal ions per subunit. Manganese or magnesium.</text>
</comment>
<comment type="subcellular location">
    <subcellularLocation>
        <location evidence="3">Cytoplasm</location>
    </subcellularLocation>
</comment>
<comment type="similarity">
    <text evidence="3">Belongs to the RNase H family.</text>
</comment>
<feature type="chain" id="PRO_0000195430" description="Ribonuclease H">
    <location>
        <begin position="1"/>
        <end position="196"/>
    </location>
</feature>
<feature type="domain" description="RNase H type-1" evidence="1">
    <location>
        <begin position="58"/>
        <end position="196"/>
    </location>
</feature>
<feature type="binding site" evidence="2">
    <location>
        <position position="71"/>
    </location>
    <ligand>
        <name>Mg(2+)</name>
        <dbReference type="ChEBI" id="CHEBI:18420"/>
        <label>1</label>
    </ligand>
</feature>
<feature type="binding site" evidence="2">
    <location>
        <position position="71"/>
    </location>
    <ligand>
        <name>Mg(2+)</name>
        <dbReference type="ChEBI" id="CHEBI:18420"/>
        <label>2</label>
    </ligand>
</feature>
<feature type="binding site" evidence="2">
    <location>
        <position position="109"/>
    </location>
    <ligand>
        <name>Mg(2+)</name>
        <dbReference type="ChEBI" id="CHEBI:18420"/>
        <label>2</label>
    </ligand>
</feature>
<feature type="binding site" evidence="2">
    <location>
        <position position="132"/>
    </location>
    <ligand>
        <name>Mg(2+)</name>
        <dbReference type="ChEBI" id="CHEBI:18420"/>
        <label>2</label>
    </ligand>
</feature>
<feature type="binding site" evidence="2">
    <location>
        <position position="192"/>
    </location>
    <ligand>
        <name>Mg(2+)</name>
        <dbReference type="ChEBI" id="CHEBI:18420"/>
        <label>1</label>
    </ligand>
</feature>
<feature type="mutagenesis site" description="Loss of activity." evidence="2">
    <original>E</original>
    <variation>Q</variation>
    <location>
        <position position="109"/>
    </location>
</feature>
<feature type="mutagenesis site" description="Loss of activity." evidence="2">
    <original>D</original>
    <variation>N</variation>
    <location>
        <position position="132"/>
    </location>
</feature>
<feature type="mutagenesis site" description="Strongly reduces activity." evidence="2">
    <original>E</original>
    <variation>A</variation>
    <location>
        <position position="188"/>
    </location>
</feature>
<feature type="mutagenesis site" description="No effect." evidence="2">
    <original>E</original>
    <variation>Q</variation>
    <location>
        <position position="188"/>
    </location>
</feature>
<feature type="mutagenesis site" description="Strongly reduced activity with manganese. Loss of activity with magnesium." evidence="2">
    <original>D</original>
    <variation>N</variation>
    <location>
        <position position="192"/>
    </location>
</feature>
<feature type="strand" evidence="4">
    <location>
        <begin position="65"/>
        <end position="75"/>
    </location>
</feature>
<feature type="turn" evidence="4">
    <location>
        <begin position="76"/>
        <end position="78"/>
    </location>
</feature>
<feature type="strand" evidence="4">
    <location>
        <begin position="79"/>
        <end position="87"/>
    </location>
</feature>
<feature type="turn" evidence="4">
    <location>
        <begin position="88"/>
        <end position="90"/>
    </location>
</feature>
<feature type="strand" evidence="4">
    <location>
        <begin position="93"/>
        <end position="103"/>
    </location>
</feature>
<feature type="helix" evidence="4">
    <location>
        <begin position="105"/>
        <end position="122"/>
    </location>
</feature>
<feature type="strand" evidence="4">
    <location>
        <begin position="129"/>
        <end position="132"/>
    </location>
</feature>
<feature type="helix" evidence="4">
    <location>
        <begin position="134"/>
        <end position="142"/>
    </location>
</feature>
<feature type="turn" evidence="4">
    <location>
        <begin position="153"/>
        <end position="155"/>
    </location>
</feature>
<feature type="helix" evidence="4">
    <location>
        <begin position="156"/>
        <end position="169"/>
    </location>
</feature>
<feature type="strand" evidence="4">
    <location>
        <begin position="178"/>
        <end position="180"/>
    </location>
</feature>
<feature type="helix" evidence="4">
    <location>
        <begin position="183"/>
        <end position="186"/>
    </location>
</feature>
<evidence type="ECO:0000255" key="1">
    <source>
        <dbReference type="PROSITE-ProRule" id="PRU00408"/>
    </source>
</evidence>
<evidence type="ECO:0000269" key="2">
    <source>
    </source>
</evidence>
<evidence type="ECO:0000305" key="3"/>
<evidence type="ECO:0007829" key="4">
    <source>
        <dbReference type="PDB" id="6DOP"/>
    </source>
</evidence>
<protein>
    <recommendedName>
        <fullName>Ribonuclease H</fullName>
        <shortName>RNase H</shortName>
        <ecNumber>3.1.26.4</ecNumber>
    </recommendedName>
</protein>
<sequence>MAKSKYYVVWNGRKPGIYTSWSACEAQVKGYTGAKFKSYPSKEEAEAAFRGEEATPKLAKEEIIWESLSVDVGSQGNPGIVEYKGVDTKTGEVLFEREPIPIGTNNMGEFLAIVHGLRYLKERNSRKPIYSDSQTAIKWVKDKKAKSTLVRNEETALIWKLVDEAEEWLNTHTYETPILKWQTDKWGEIKADYGRK</sequence>
<name>RNH1_HALH5</name>
<gene>
    <name type="primary">rnhA</name>
    <name type="ordered locus">BH0863</name>
</gene>
<reference key="1">
    <citation type="journal article" date="2000" name="Nucleic Acids Res.">
        <title>Complete genome sequence of the alkaliphilic bacterium Bacillus halodurans and genomic sequence comparison with Bacillus subtilis.</title>
        <authorList>
            <person name="Takami H."/>
            <person name="Nakasone K."/>
            <person name="Takaki Y."/>
            <person name="Maeno G."/>
            <person name="Sasaki R."/>
            <person name="Masui N."/>
            <person name="Fuji F."/>
            <person name="Hirama C."/>
            <person name="Nakamura Y."/>
            <person name="Ogasawara N."/>
            <person name="Kuhara S."/>
            <person name="Horikoshi K."/>
        </authorList>
    </citation>
    <scope>NUCLEOTIDE SEQUENCE [LARGE SCALE GENOMIC DNA]</scope>
    <source>
        <strain>ATCC BAA-125 / DSM 18197 / FERM 7344 / JCM 9153 / C-125</strain>
    </source>
</reference>
<reference key="2">
    <citation type="journal article" date="2005" name="Cell">
        <title>Crystal structures of RNase H bound to an RNA/DNA hybrid: substrate specificity and metal-dependent catalysis.</title>
        <authorList>
            <person name="Nowotny M."/>
            <person name="Gaidamakov S.A."/>
            <person name="Crouch R.J."/>
            <person name="Yang W."/>
        </authorList>
    </citation>
    <scope>X-RAY CRYSTALLOGRAPHY (1.5 ANGSTROMS) OF 59-196 OF MUTANT ASN-132 IN COMPLEX WITH MAGNESIUM AND SUBSTRATE</scope>
    <scope>FUNCTION</scope>
    <scope>MUTAGENESIS OF GLU-109; ASP-132; GLU-188 AND ASP-192</scope>
</reference>
<accession>Q9KEI9</accession>
<keyword id="KW-0002">3D-structure</keyword>
<keyword id="KW-0963">Cytoplasm</keyword>
<keyword id="KW-0255">Endonuclease</keyword>
<keyword id="KW-0378">Hydrolase</keyword>
<keyword id="KW-0460">Magnesium</keyword>
<keyword id="KW-0464">Manganese</keyword>
<keyword id="KW-0479">Metal-binding</keyword>
<keyword id="KW-0540">Nuclease</keyword>
<keyword id="KW-1185">Reference proteome</keyword>
<proteinExistence type="evidence at protein level"/>